<accession>Q9FLR1</accession>
<accession>O49765</accession>
<sequence length="336" mass="37966">MSRKPCCVGEGLKKGAWTAEEDKKLISYIHEHGEGGWRDIPQKAGLKRCGKSCRLRWANYLKPDIKRGEFSYEEEQIIIMLHASRGNKWSVIARHLPKRTDNEIKNYWNTHLKKLLIDKGIDPVTHKPLAYDSNPDEQSQSGSISPKSLPPSSSKNVPEITSSDETPKYDASLSSKKRCFKRSSSTSKLLNKVAARASSMGTILGASIEGTLISSTPLSSCLNDDFSETSQFQMEEFDPFYQSSEHIIDHMKEDISINNSEYDFSQFLEQFSNNEGEEADNTGGGYNQDLLMSDVSSTSVDEDEMMQNITGWSNYLLDHSDFNYDTSQDYDDKNFI</sequence>
<dbReference type="EMBL" id="AF062872">
    <property type="protein sequence ID" value="AAC83594.1"/>
    <property type="molecule type" value="mRNA"/>
</dbReference>
<dbReference type="EMBL" id="AB010070">
    <property type="protein sequence ID" value="BAB11448.1"/>
    <property type="molecule type" value="Genomic_DNA"/>
</dbReference>
<dbReference type="EMBL" id="CP002688">
    <property type="protein sequence ID" value="AED91194.1"/>
    <property type="molecule type" value="Genomic_DNA"/>
</dbReference>
<dbReference type="EMBL" id="AY035145">
    <property type="protein sequence ID" value="AAK59649.1"/>
    <property type="molecule type" value="mRNA"/>
</dbReference>
<dbReference type="EMBL" id="AY059078">
    <property type="protein sequence ID" value="AAL15184.1"/>
    <property type="molecule type" value="mRNA"/>
</dbReference>
<dbReference type="EMBL" id="AY519617">
    <property type="protein sequence ID" value="AAS10087.1"/>
    <property type="molecule type" value="mRNA"/>
</dbReference>
<dbReference type="PIR" id="T51644">
    <property type="entry name" value="T51644"/>
</dbReference>
<dbReference type="RefSeq" id="NP_196386.1">
    <property type="nucleotide sequence ID" value="NM_120851.2"/>
</dbReference>
<dbReference type="PDB" id="7FDM">
    <property type="method" value="X-ray"/>
    <property type="resolution" value="2.50 A"/>
    <property type="chains" value="C/D=174-222"/>
</dbReference>
<dbReference type="PDBsum" id="7FDM"/>
<dbReference type="SMR" id="Q9FLR1"/>
<dbReference type="BioGRID" id="15941">
    <property type="interactions" value="6"/>
</dbReference>
<dbReference type="IntAct" id="Q9FLR1">
    <property type="interactions" value="2"/>
</dbReference>
<dbReference type="STRING" id="3702.Q9FLR1"/>
<dbReference type="PaxDb" id="3702-AT5G07690.1"/>
<dbReference type="ProteomicsDB" id="251210"/>
<dbReference type="EnsemblPlants" id="AT5G07690.1">
    <property type="protein sequence ID" value="AT5G07690.1"/>
    <property type="gene ID" value="AT5G07690"/>
</dbReference>
<dbReference type="GeneID" id="830662"/>
<dbReference type="Gramene" id="AT5G07690.1">
    <property type="protein sequence ID" value="AT5G07690.1"/>
    <property type="gene ID" value="AT5G07690"/>
</dbReference>
<dbReference type="KEGG" id="ath:AT5G07690"/>
<dbReference type="Araport" id="AT5G07690"/>
<dbReference type="TAIR" id="AT5G07690">
    <property type="gene designation" value="MYB29"/>
</dbReference>
<dbReference type="eggNOG" id="KOG0048">
    <property type="taxonomic scope" value="Eukaryota"/>
</dbReference>
<dbReference type="HOGENOM" id="CLU_028567_0_0_1"/>
<dbReference type="InParanoid" id="Q9FLR1"/>
<dbReference type="OMA" id="NDMDEFD"/>
<dbReference type="PhylomeDB" id="Q9FLR1"/>
<dbReference type="PRO" id="PR:Q9FLR1"/>
<dbReference type="Proteomes" id="UP000006548">
    <property type="component" value="Chromosome 5"/>
</dbReference>
<dbReference type="ExpressionAtlas" id="Q9FLR1">
    <property type="expression patterns" value="baseline and differential"/>
</dbReference>
<dbReference type="GO" id="GO:0005634">
    <property type="term" value="C:nucleus"/>
    <property type="evidence" value="ECO:0007669"/>
    <property type="project" value="UniProtKB-SubCell"/>
</dbReference>
<dbReference type="GO" id="GO:0003700">
    <property type="term" value="F:DNA-binding transcription factor activity"/>
    <property type="evidence" value="ECO:0000314"/>
    <property type="project" value="TAIR"/>
</dbReference>
<dbReference type="GO" id="GO:0000976">
    <property type="term" value="F:transcription cis-regulatory region binding"/>
    <property type="evidence" value="ECO:0000353"/>
    <property type="project" value="TAIR"/>
</dbReference>
<dbReference type="GO" id="GO:0010438">
    <property type="term" value="P:cellular response to sulfur starvation"/>
    <property type="evidence" value="ECO:0000304"/>
    <property type="project" value="TAIR"/>
</dbReference>
<dbReference type="GO" id="GO:0050832">
    <property type="term" value="P:defense response to fungus"/>
    <property type="evidence" value="ECO:0000316"/>
    <property type="project" value="TAIR"/>
</dbReference>
<dbReference type="GO" id="GO:0009819">
    <property type="term" value="P:drought recovery"/>
    <property type="evidence" value="ECO:0000315"/>
    <property type="project" value="TAIR"/>
</dbReference>
<dbReference type="GO" id="GO:0009755">
    <property type="term" value="P:hormone-mediated signaling pathway"/>
    <property type="evidence" value="ECO:0000315"/>
    <property type="project" value="TAIR"/>
</dbReference>
<dbReference type="GO" id="GO:0009682">
    <property type="term" value="P:induced systemic resistance"/>
    <property type="evidence" value="ECO:0000315"/>
    <property type="project" value="TAIR"/>
</dbReference>
<dbReference type="GO" id="GO:0009867">
    <property type="term" value="P:jasmonic acid mediated signaling pathway"/>
    <property type="evidence" value="ECO:0000315"/>
    <property type="project" value="TAIR"/>
</dbReference>
<dbReference type="GO" id="GO:0031930">
    <property type="term" value="P:mitochondria-nucleus signaling pathway"/>
    <property type="evidence" value="ECO:0000315"/>
    <property type="project" value="TAIR"/>
</dbReference>
<dbReference type="GO" id="GO:0010105">
    <property type="term" value="P:negative regulation of ethylene-activated signaling pathway"/>
    <property type="evidence" value="ECO:0000315"/>
    <property type="project" value="TAIR"/>
</dbReference>
<dbReference type="GO" id="GO:0006355">
    <property type="term" value="P:regulation of DNA-templated transcription"/>
    <property type="evidence" value="ECO:0000270"/>
    <property type="project" value="TAIR"/>
</dbReference>
<dbReference type="GO" id="GO:0010439">
    <property type="term" value="P:regulation of glucosinolate biosynthetic process"/>
    <property type="evidence" value="ECO:0000315"/>
    <property type="project" value="TAIR"/>
</dbReference>
<dbReference type="GO" id="GO:2000070">
    <property type="term" value="P:regulation of response to water deprivation"/>
    <property type="evidence" value="ECO:0000314"/>
    <property type="project" value="TAIR"/>
</dbReference>
<dbReference type="GO" id="GO:0009617">
    <property type="term" value="P:response to bacterium"/>
    <property type="evidence" value="ECO:0000315"/>
    <property type="project" value="TAIR"/>
</dbReference>
<dbReference type="GO" id="GO:0009644">
    <property type="term" value="P:response to high light intensity"/>
    <property type="evidence" value="ECO:0000314"/>
    <property type="project" value="TAIR"/>
</dbReference>
<dbReference type="GO" id="GO:0009625">
    <property type="term" value="P:response to insect"/>
    <property type="evidence" value="ECO:0000270"/>
    <property type="project" value="TAIR"/>
</dbReference>
<dbReference type="GO" id="GO:0009414">
    <property type="term" value="P:response to water deprivation"/>
    <property type="evidence" value="ECO:0000270"/>
    <property type="project" value="TAIR"/>
</dbReference>
<dbReference type="GO" id="GO:0009611">
    <property type="term" value="P:response to wounding"/>
    <property type="evidence" value="ECO:0000270"/>
    <property type="project" value="UniProtKB"/>
</dbReference>
<dbReference type="CDD" id="cd00167">
    <property type="entry name" value="SANT"/>
    <property type="match status" value="2"/>
</dbReference>
<dbReference type="FunFam" id="1.10.10.60:FF:000394">
    <property type="entry name" value="MYB transcription factor"/>
    <property type="match status" value="1"/>
</dbReference>
<dbReference type="FunFam" id="1.10.10.60:FF:000001">
    <property type="entry name" value="MYB-related transcription factor"/>
    <property type="match status" value="1"/>
</dbReference>
<dbReference type="Gene3D" id="1.10.10.60">
    <property type="entry name" value="Homeodomain-like"/>
    <property type="match status" value="2"/>
</dbReference>
<dbReference type="InterPro" id="IPR009057">
    <property type="entry name" value="Homeodomain-like_sf"/>
</dbReference>
<dbReference type="InterPro" id="IPR017930">
    <property type="entry name" value="Myb_dom"/>
</dbReference>
<dbReference type="InterPro" id="IPR015495">
    <property type="entry name" value="Myb_TF_plants"/>
</dbReference>
<dbReference type="InterPro" id="IPR001005">
    <property type="entry name" value="SANT/Myb"/>
</dbReference>
<dbReference type="PANTHER" id="PTHR47994">
    <property type="entry name" value="F14D16.11-RELATED"/>
    <property type="match status" value="1"/>
</dbReference>
<dbReference type="PANTHER" id="PTHR47994:SF5">
    <property type="entry name" value="F14D16.11-RELATED"/>
    <property type="match status" value="1"/>
</dbReference>
<dbReference type="Pfam" id="PF00249">
    <property type="entry name" value="Myb_DNA-binding"/>
    <property type="match status" value="2"/>
</dbReference>
<dbReference type="SMART" id="SM00717">
    <property type="entry name" value="SANT"/>
    <property type="match status" value="2"/>
</dbReference>
<dbReference type="SUPFAM" id="SSF46689">
    <property type="entry name" value="Homeodomain-like"/>
    <property type="match status" value="1"/>
</dbReference>
<dbReference type="PROSITE" id="PS51294">
    <property type="entry name" value="HTH_MYB"/>
    <property type="match status" value="2"/>
</dbReference>
<comment type="function">
    <text evidence="4 5 6 7 9 10 11">Plays a minor rheostat role in aliphatic glucosinolates (GLSs) biosynthesis, mostly short chained. Together with MYB28/HAG1 and MYB76/HAG2, promotes aliphatic glucosinolate biosynthesis but represses indolic glucosinolate biosynthesis. Prevents insect performance (e.g. lepidopteran insect Mamestra brassicae) by promoting glucosinolates.</text>
</comment>
<comment type="subunit">
    <text>Can form complexes with MYC2, MYC3 or MYC4.</text>
</comment>
<comment type="interaction">
    <interactant intactId="EBI-15410392">
        <id>Q9FLR1</id>
    </interactant>
    <interactant intactId="EBI-4434999">
        <id>Q9FJJ3</id>
        <label>SRO5</label>
    </interactant>
    <organismsDiffer>false</organismsDiffer>
    <experiments>3</experiments>
</comment>
<comment type="subcellular location">
    <subcellularLocation>
        <location evidence="1">Nucleus</location>
    </subcellularLocation>
</comment>
<comment type="tissue specificity">
    <text evidence="5 8 12">Expressed in both vegetative and generative organs. Mostly present in seedlings, inflorescences, roots and stems, and, to a lower extent, in leaves (in midvein and trichomes) and siliques.</text>
</comment>
<comment type="developmental stage">
    <text evidence="5">Primarily present around the midvein in seedlings. Accumulates gradually in expanding leaves, reaching a maximum in fully expanded leaves in the primary vein.</text>
</comment>
<comment type="induction">
    <text evidence="3 5 10 12">Slightly induced by gibberellic acid (GA), jasmonic acid (JA, MeJA), nitrogen starvation and UV LIGHT treatment. Transiently repressed by salicylic acid (SA). Accumulates upon mechanical stimuli (e.g. wounding) in inflorescence. Down-regulated by sulfur-deficient stress.</text>
</comment>
<comment type="disruption phenotype">
    <text evidence="9">Low levels of aliphatic glucosinolates.</text>
</comment>
<reference key="1">
    <citation type="journal article" date="1998" name="Plant J.">
        <title>Towards functional characterisation of the members of the R2R3-MYB gene family from Arabidopsis thaliana.</title>
        <authorList>
            <person name="Kranz H.D."/>
            <person name="Denekamp M."/>
            <person name="Greco R."/>
            <person name="Jin H.-L."/>
            <person name="Leyva A."/>
            <person name="Meissner R.C."/>
            <person name="Petroni K."/>
            <person name="Urzainqui A."/>
            <person name="Bevan M."/>
            <person name="Martin C."/>
            <person name="Smeekens S."/>
            <person name="Tonelli C."/>
            <person name="Paz-Ares J."/>
            <person name="Weisshaar B."/>
        </authorList>
    </citation>
    <scope>NUCLEOTIDE SEQUENCE [MRNA]</scope>
    <scope>TISSUE SPECIFICITY</scope>
    <scope>INDUCTION BY NITROGEN STARVATION AND UV LIGHT</scope>
    <scope>NOMENCLATURE</scope>
    <source>
        <strain>cv. Columbia</strain>
    </source>
</reference>
<reference key="2">
    <citation type="journal article" date="1998" name="DNA Res.">
        <title>Structural analysis of Arabidopsis thaliana chromosome 5. IV. Sequence features of the regions of 1,456,315 bp covered by nineteen physically assigned P1 and TAC clones.</title>
        <authorList>
            <person name="Sato S."/>
            <person name="Kaneko T."/>
            <person name="Kotani H."/>
            <person name="Nakamura Y."/>
            <person name="Asamizu E."/>
            <person name="Miyajima N."/>
            <person name="Tabata S."/>
        </authorList>
    </citation>
    <scope>NUCLEOTIDE SEQUENCE [LARGE SCALE GENOMIC DNA]</scope>
    <source>
        <strain>cv. Columbia</strain>
    </source>
</reference>
<reference key="3">
    <citation type="journal article" date="2017" name="Plant J.">
        <title>Araport11: a complete reannotation of the Arabidopsis thaliana reference genome.</title>
        <authorList>
            <person name="Cheng C.Y."/>
            <person name="Krishnakumar V."/>
            <person name="Chan A.P."/>
            <person name="Thibaud-Nissen F."/>
            <person name="Schobel S."/>
            <person name="Town C.D."/>
        </authorList>
    </citation>
    <scope>GENOME REANNOTATION</scope>
    <source>
        <strain>cv. Columbia</strain>
    </source>
</reference>
<reference key="4">
    <citation type="journal article" date="2003" name="Science">
        <title>Empirical analysis of transcriptional activity in the Arabidopsis genome.</title>
        <authorList>
            <person name="Yamada K."/>
            <person name="Lim J."/>
            <person name="Dale J.M."/>
            <person name="Chen H."/>
            <person name="Shinn P."/>
            <person name="Palm C.J."/>
            <person name="Southwick A.M."/>
            <person name="Wu H.C."/>
            <person name="Kim C.J."/>
            <person name="Nguyen M."/>
            <person name="Pham P.K."/>
            <person name="Cheuk R.F."/>
            <person name="Karlin-Newmann G."/>
            <person name="Liu S.X."/>
            <person name="Lam B."/>
            <person name="Sakano H."/>
            <person name="Wu T."/>
            <person name="Yu G."/>
            <person name="Miranda M."/>
            <person name="Quach H.L."/>
            <person name="Tripp M."/>
            <person name="Chang C.H."/>
            <person name="Lee J.M."/>
            <person name="Toriumi M.J."/>
            <person name="Chan M.M."/>
            <person name="Tang C.C."/>
            <person name="Onodera C.S."/>
            <person name="Deng J.M."/>
            <person name="Akiyama K."/>
            <person name="Ansari Y."/>
            <person name="Arakawa T."/>
            <person name="Banh J."/>
            <person name="Banno F."/>
            <person name="Bowser L."/>
            <person name="Brooks S.Y."/>
            <person name="Carninci P."/>
            <person name="Chao Q."/>
            <person name="Choy N."/>
            <person name="Enju A."/>
            <person name="Goldsmith A.D."/>
            <person name="Gurjal M."/>
            <person name="Hansen N.F."/>
            <person name="Hayashizaki Y."/>
            <person name="Johnson-Hopson C."/>
            <person name="Hsuan V.W."/>
            <person name="Iida K."/>
            <person name="Karnes M."/>
            <person name="Khan S."/>
            <person name="Koesema E."/>
            <person name="Ishida J."/>
            <person name="Jiang P.X."/>
            <person name="Jones T."/>
            <person name="Kawai J."/>
            <person name="Kamiya A."/>
            <person name="Meyers C."/>
            <person name="Nakajima M."/>
            <person name="Narusaka M."/>
            <person name="Seki M."/>
            <person name="Sakurai T."/>
            <person name="Satou M."/>
            <person name="Tamse R."/>
            <person name="Vaysberg M."/>
            <person name="Wallender E.K."/>
            <person name="Wong C."/>
            <person name="Yamamura Y."/>
            <person name="Yuan S."/>
            <person name="Shinozaki K."/>
            <person name="Davis R.W."/>
            <person name="Theologis A."/>
            <person name="Ecker J.R."/>
        </authorList>
    </citation>
    <scope>NUCLEOTIDE SEQUENCE [LARGE SCALE MRNA]</scope>
    <source>
        <strain>cv. Columbia</strain>
    </source>
</reference>
<reference key="5">
    <citation type="submission" date="2004-01" db="EMBL/GenBank/DDBJ databases">
        <title>The MYB transcription factor family in Arabidopsis: a genome-wide cloning and expression pattern analysis.</title>
        <authorList>
            <person name="Qu L.-J."/>
            <person name="Gu H."/>
        </authorList>
    </citation>
    <scope>NUCLEOTIDE SEQUENCE [LARGE SCALE MRNA]</scope>
</reference>
<reference key="6">
    <citation type="journal article" date="2001" name="Curr. Opin. Plant Biol.">
        <title>The R2R3-MYB gene family in Arabidopsis thaliana.</title>
        <authorList>
            <person name="Stracke R."/>
            <person name="Werber M."/>
            <person name="Weisshaar B."/>
        </authorList>
    </citation>
    <scope>GENE FAMILY</scope>
    <scope>NOMENCLATURE</scope>
    <source>
        <strain>cv. Columbia</strain>
    </source>
</reference>
<reference key="7">
    <citation type="journal article" date="2006" name="Plant Mol. Biol.">
        <title>The MYB transcription factor superfamily of Arabidopsis: expression analysis and phylogenetic comparison with the rice MYB family.</title>
        <authorList>
            <person name="Chen Y."/>
            <person name="Yang X."/>
            <person name="He K."/>
            <person name="Liu M."/>
            <person name="Li J."/>
            <person name="Gao Z."/>
            <person name="Lin Z."/>
            <person name="Zhang Y."/>
            <person name="Wang X."/>
            <person name="Qiu X."/>
            <person name="Shen Y."/>
            <person name="Zhang L."/>
            <person name="Deng X."/>
            <person name="Luo J."/>
            <person name="Deng X.-W."/>
            <person name="Chen Z."/>
            <person name="Gu H."/>
            <person name="Qu L.-J."/>
        </authorList>
    </citation>
    <scope>GENE FAMILY</scope>
    <scope>INDUCTION BY GA; JA AND SA</scope>
</reference>
<reference key="8">
    <citation type="journal article" date="2007" name="Proc. Natl. Acad. Sci. U.S.A.">
        <title>Omics-based identification of Arabidopsis Myb transcription factors regulating aliphatic glucosinolate biosynthesis.</title>
        <authorList>
            <person name="Hirai M.Y."/>
            <person name="Sugiyama K."/>
            <person name="Sawada Y."/>
            <person name="Tohge T."/>
            <person name="Obayashi T."/>
            <person name="Suzuki A."/>
            <person name="Araki R."/>
            <person name="Sakurai N."/>
            <person name="Suzuki H."/>
            <person name="Aoki K."/>
            <person name="Goda H."/>
            <person name="Nishizawa O.I."/>
            <person name="Shibata D."/>
            <person name="Saito K."/>
        </authorList>
    </citation>
    <scope>FUNCTION IN GLUCOSINOLATES BIOSYNTHESIS</scope>
</reference>
<reference key="9">
    <citation type="journal article" date="2008" name="New Phytol.">
        <title>HAG2/MYB76 and HAG3/MYB29 exert a specific and coordinated control on the regulation of aliphatic glucosinolate biosynthesis in Arabidopsis thaliana.</title>
        <authorList>
            <person name="Gigolashvili T."/>
            <person name="Engqvist M."/>
            <person name="Yatusevich R."/>
            <person name="Mueller C."/>
            <person name="Fluegge U.I."/>
        </authorList>
    </citation>
    <scope>FUNCTION IN GLUCOSINOLATES BIOSYNTHESIS</scope>
    <scope>TISSUE SPECIFICITY</scope>
    <scope>DEVELOPMENTAL STAGE</scope>
    <scope>INDUCTION BY WOUNDING; MEJA AND SA</scope>
</reference>
<reference key="10">
    <citation type="journal article" date="2008" name="PLoS ONE">
        <title>The impact of the absence of aliphatic glucosinolates on insect herbivory in Arabidopsis.</title>
        <authorList>
            <person name="Beekwilder J."/>
            <person name="van Leeuwen W."/>
            <person name="van Dam N.M."/>
            <person name="Bertossi M."/>
            <person name="Grandi V."/>
            <person name="Mizzi L."/>
            <person name="Soloviev M."/>
            <person name="Szabados L."/>
            <person name="Molthoff J.W."/>
            <person name="Schipper B."/>
            <person name="Verbocht H."/>
            <person name="de Vos R.C.H."/>
            <person name="Morandini P."/>
            <person name="Aarts M.G.M."/>
            <person name="Bovy A."/>
        </authorList>
    </citation>
    <scope>FUNCTION IN GLUCOSINOLATES BIOSYNTHESIS</scope>
    <source>
        <strain>cv. Columbia</strain>
    </source>
</reference>
<reference key="11">
    <citation type="journal article" date="2010" name="Plant Physiol.">
        <title>A complex interplay of three R2R3 MYB transcription factors determines the profile of aliphatic glucosinolates in Arabidopsis.</title>
        <authorList>
            <person name="Soenderby I.E."/>
            <person name="Burow M."/>
            <person name="Rowe H.C."/>
            <person name="Kliebenstein D.J."/>
            <person name="Halkier B.A."/>
        </authorList>
    </citation>
    <scope>FUNCTION</scope>
    <source>
        <strain>cv. Columbia</strain>
    </source>
</reference>
<reference key="12">
    <citation type="journal article" date="2012" name="Front. Plant Sci.">
        <title>Glucosinolates are produced in trichomes of Arabidopsis thaliana.</title>
        <authorList>
            <person name="Frerigmann H."/>
            <person name="Boettcher C."/>
            <person name="Baatout D."/>
            <person name="Gigolashvili T."/>
        </authorList>
    </citation>
    <scope>TISSUE SPECIFICITY</scope>
    <source>
        <strain>cv. Columbia</strain>
    </source>
</reference>
<reference key="13">
    <citation type="journal article" date="2013" name="J. Exp. Bot.">
        <title>BZR1 and BES1 participate in regulation of glucosinolate biosynthesis by brassinosteroids in Arabidopsis.</title>
        <authorList>
            <person name="Guo R."/>
            <person name="Qian H."/>
            <person name="Shen W."/>
            <person name="Liu L."/>
            <person name="Zhang M."/>
            <person name="Cai C."/>
            <person name="Zhao Y."/>
            <person name="Qiao J."/>
            <person name="Wang Q."/>
        </authorList>
    </citation>
    <scope>FUNCTION</scope>
    <scope>DISRUPTION PHENOTYPE</scope>
</reference>
<reference key="14">
    <citation type="journal article" date="2013" name="Plant Cell Physiol.">
        <title>Novel insights into the function of Arabidopsis R2R3-MYB transcription factors regulating aliphatic glucosinolate biosynthesis.</title>
        <authorList>
            <person name="Li Y."/>
            <person name="Sawada Y."/>
            <person name="Hirai A."/>
            <person name="Sato M."/>
            <person name="Kuwahara A."/>
            <person name="Yan X."/>
            <person name="Hirai M.Y."/>
        </authorList>
    </citation>
    <scope>FUNCTION</scope>
    <scope>INDUCTION BY SULFUR</scope>
</reference>
<reference key="15">
    <citation type="journal article" date="2013" name="Plant Cell">
        <title>Arabidopsis basic helix-loop-helix transcription factors MYC2, MYC3, and MYC4 regulate glucosinolate biosynthesis, insect performance, and feeding behavior.</title>
        <authorList>
            <person name="Schweizer F."/>
            <person name="Fernandez-Calvo P."/>
            <person name="Zander M."/>
            <person name="Diez-Diaz M."/>
            <person name="Fonseca S."/>
            <person name="Glauser G."/>
            <person name="Lewsey M.G."/>
            <person name="Ecker J.R."/>
            <person name="Solano R."/>
            <person name="Reymond P."/>
        </authorList>
    </citation>
    <scope>FUNCTION</scope>
    <scope>INTERACTION WITH MYC2; MYC3 AND MYC4</scope>
</reference>
<protein>
    <recommendedName>
        <fullName>Transcription factor MYB29</fullName>
    </recommendedName>
    <alternativeName>
        <fullName>Myb-related protein 29</fullName>
        <shortName>AtMYB29</shortName>
    </alternativeName>
    <alternativeName>
        <fullName>Protein HIGH ALIPHATIC GLUCOSINOLATE 3</fullName>
    </alternativeName>
    <alternativeName>
        <fullName>Protein PRODUCTION OF METHIONINE-DERIVED GLUCOSINOLATE 2</fullName>
    </alternativeName>
</protein>
<gene>
    <name type="primary">MYB29</name>
    <name type="synonym">HAG3</name>
    <name type="synonym">PMG2</name>
    <name type="ordered locus">At5g07690</name>
    <name type="ORF">MBK20.15</name>
</gene>
<name>MYB29_ARATH</name>
<feature type="chain" id="PRO_0000415437" description="Transcription factor MYB29">
    <location>
        <begin position="1"/>
        <end position="336"/>
    </location>
</feature>
<feature type="domain" description="HTH myb-type 1" evidence="1">
    <location>
        <begin position="9"/>
        <end position="65"/>
    </location>
</feature>
<feature type="domain" description="HTH myb-type 2" evidence="1">
    <location>
        <begin position="66"/>
        <end position="116"/>
    </location>
</feature>
<feature type="DNA-binding region" description="H-T-H motif" evidence="1">
    <location>
        <begin position="37"/>
        <end position="61"/>
    </location>
</feature>
<feature type="DNA-binding region" description="H-T-H motif" evidence="1">
    <location>
        <begin position="89"/>
        <end position="112"/>
    </location>
</feature>
<feature type="region of interest" description="Disordered" evidence="2">
    <location>
        <begin position="127"/>
        <end position="170"/>
    </location>
</feature>
<feature type="compositionally biased region" description="Low complexity" evidence="2">
    <location>
        <begin position="141"/>
        <end position="154"/>
    </location>
</feature>
<feature type="compositionally biased region" description="Polar residues" evidence="2">
    <location>
        <begin position="155"/>
        <end position="164"/>
    </location>
</feature>
<feature type="sequence conflict" description="In Ref. 1; AAC83594." evidence="13" ref="1">
    <original>E</original>
    <variation>G</variation>
    <location>
        <position position="34"/>
    </location>
</feature>
<feature type="sequence conflict" description="In Ref. 1; AAC83594." evidence="13" ref="1">
    <original>D</original>
    <variation>N</variation>
    <location>
        <position position="263"/>
    </location>
</feature>
<feature type="helix" evidence="14">
    <location>
        <begin position="185"/>
        <end position="196"/>
    </location>
</feature>
<feature type="turn" evidence="14">
    <location>
        <begin position="197"/>
        <end position="199"/>
    </location>
</feature>
<keyword id="KW-0002">3D-structure</keyword>
<keyword id="KW-0238">DNA-binding</keyword>
<keyword id="KW-0539">Nucleus</keyword>
<keyword id="KW-1185">Reference proteome</keyword>
<keyword id="KW-0677">Repeat</keyword>
<keyword id="KW-0804">Transcription</keyword>
<keyword id="KW-0805">Transcription regulation</keyword>
<proteinExistence type="evidence at protein level"/>
<organism>
    <name type="scientific">Arabidopsis thaliana</name>
    <name type="common">Mouse-ear cress</name>
    <dbReference type="NCBI Taxonomy" id="3702"/>
    <lineage>
        <taxon>Eukaryota</taxon>
        <taxon>Viridiplantae</taxon>
        <taxon>Streptophyta</taxon>
        <taxon>Embryophyta</taxon>
        <taxon>Tracheophyta</taxon>
        <taxon>Spermatophyta</taxon>
        <taxon>Magnoliopsida</taxon>
        <taxon>eudicotyledons</taxon>
        <taxon>Gunneridae</taxon>
        <taxon>Pentapetalae</taxon>
        <taxon>rosids</taxon>
        <taxon>malvids</taxon>
        <taxon>Brassicales</taxon>
        <taxon>Brassicaceae</taxon>
        <taxon>Camelineae</taxon>
        <taxon>Arabidopsis</taxon>
    </lineage>
</organism>
<evidence type="ECO:0000255" key="1">
    <source>
        <dbReference type="PROSITE-ProRule" id="PRU00625"/>
    </source>
</evidence>
<evidence type="ECO:0000256" key="2">
    <source>
        <dbReference type="SAM" id="MobiDB-lite"/>
    </source>
</evidence>
<evidence type="ECO:0000269" key="3">
    <source>
    </source>
</evidence>
<evidence type="ECO:0000269" key="4">
    <source>
    </source>
</evidence>
<evidence type="ECO:0000269" key="5">
    <source>
    </source>
</evidence>
<evidence type="ECO:0000269" key="6">
    <source>
    </source>
</evidence>
<evidence type="ECO:0000269" key="7">
    <source>
    </source>
</evidence>
<evidence type="ECO:0000269" key="8">
    <source>
    </source>
</evidence>
<evidence type="ECO:0000269" key="9">
    <source>
    </source>
</evidence>
<evidence type="ECO:0000269" key="10">
    <source>
    </source>
</evidence>
<evidence type="ECO:0000269" key="11">
    <source>
    </source>
</evidence>
<evidence type="ECO:0000269" key="12">
    <source>
    </source>
</evidence>
<evidence type="ECO:0000305" key="13"/>
<evidence type="ECO:0007829" key="14">
    <source>
        <dbReference type="PDB" id="7FDM"/>
    </source>
</evidence>